<protein>
    <recommendedName>
        <fullName evidence="1">Macrodomain Ter protein</fullName>
    </recommendedName>
</protein>
<feature type="chain" id="PRO_1000136681" description="Macrodomain Ter protein">
    <location>
        <begin position="1"/>
        <end position="150"/>
    </location>
</feature>
<evidence type="ECO:0000255" key="1">
    <source>
        <dbReference type="HAMAP-Rule" id="MF_01073"/>
    </source>
</evidence>
<organism>
    <name type="scientific">Shigella boydii serotype 18 (strain CDC 3083-94 / BS512)</name>
    <dbReference type="NCBI Taxonomy" id="344609"/>
    <lineage>
        <taxon>Bacteria</taxon>
        <taxon>Pseudomonadati</taxon>
        <taxon>Pseudomonadota</taxon>
        <taxon>Gammaproteobacteria</taxon>
        <taxon>Enterobacterales</taxon>
        <taxon>Enterobacteriaceae</taxon>
        <taxon>Shigella</taxon>
    </lineage>
</organism>
<name>MATP_SHIB3</name>
<reference key="1">
    <citation type="submission" date="2008-05" db="EMBL/GenBank/DDBJ databases">
        <title>Complete sequence of Shigella boydii serotype 18 strain BS512.</title>
        <authorList>
            <person name="Rasko D.A."/>
            <person name="Rosovitz M."/>
            <person name="Maurelli A.T."/>
            <person name="Myers G."/>
            <person name="Seshadri R."/>
            <person name="Cer R."/>
            <person name="Jiang L."/>
            <person name="Ravel J."/>
            <person name="Sebastian Y."/>
        </authorList>
    </citation>
    <scope>NUCLEOTIDE SEQUENCE [LARGE SCALE GENOMIC DNA]</scope>
    <source>
        <strain>CDC 3083-94 / BS512</strain>
    </source>
</reference>
<gene>
    <name evidence="1" type="primary">matP</name>
    <name type="ordered locus">SbBS512_E2360</name>
</gene>
<proteinExistence type="inferred from homology"/>
<keyword id="KW-0131">Cell cycle</keyword>
<keyword id="KW-0132">Cell division</keyword>
<keyword id="KW-0963">Cytoplasm</keyword>
<keyword id="KW-0238">DNA-binding</keyword>
<keyword id="KW-1185">Reference proteome</keyword>
<dbReference type="EMBL" id="CP001063">
    <property type="protein sequence ID" value="ACD06979.1"/>
    <property type="molecule type" value="Genomic_DNA"/>
</dbReference>
<dbReference type="RefSeq" id="WP_000877160.1">
    <property type="nucleotide sequence ID" value="NC_010658.1"/>
</dbReference>
<dbReference type="SMR" id="B2TTT9"/>
<dbReference type="STRING" id="344609.SbBS512_E2360"/>
<dbReference type="KEGG" id="sbc:SbBS512_E2360"/>
<dbReference type="HOGENOM" id="CLU_142157_0_0_6"/>
<dbReference type="Proteomes" id="UP000001030">
    <property type="component" value="Chromosome"/>
</dbReference>
<dbReference type="GO" id="GO:0005737">
    <property type="term" value="C:cytoplasm"/>
    <property type="evidence" value="ECO:0007669"/>
    <property type="project" value="UniProtKB-SubCell"/>
</dbReference>
<dbReference type="GO" id="GO:0043565">
    <property type="term" value="F:sequence-specific DNA binding"/>
    <property type="evidence" value="ECO:0007669"/>
    <property type="project" value="UniProtKB-UniRule"/>
</dbReference>
<dbReference type="GO" id="GO:0051301">
    <property type="term" value="P:cell division"/>
    <property type="evidence" value="ECO:0007669"/>
    <property type="project" value="UniProtKB-UniRule"/>
</dbReference>
<dbReference type="GO" id="GO:0006355">
    <property type="term" value="P:regulation of DNA-templated transcription"/>
    <property type="evidence" value="ECO:0007669"/>
    <property type="project" value="InterPro"/>
</dbReference>
<dbReference type="FunFam" id="1.10.1220.10:FF:000004">
    <property type="entry name" value="Macrodomain Ter protein"/>
    <property type="match status" value="1"/>
</dbReference>
<dbReference type="FunFam" id="1.20.1270.380:FF:000001">
    <property type="entry name" value="Macrodomain Ter protein"/>
    <property type="match status" value="1"/>
</dbReference>
<dbReference type="Gene3D" id="1.20.1270.380">
    <property type="entry name" value="MatP, N-terminal domain"/>
    <property type="match status" value="1"/>
</dbReference>
<dbReference type="Gene3D" id="1.10.1220.10">
    <property type="entry name" value="Met repressor-like"/>
    <property type="match status" value="1"/>
</dbReference>
<dbReference type="HAMAP" id="MF_01073">
    <property type="entry name" value="MatP"/>
    <property type="match status" value="1"/>
</dbReference>
<dbReference type="InterPro" id="IPR013321">
    <property type="entry name" value="Arc_rbn_hlx_hlx"/>
</dbReference>
<dbReference type="InterPro" id="IPR009390">
    <property type="entry name" value="MatP"/>
</dbReference>
<dbReference type="InterPro" id="IPR035375">
    <property type="entry name" value="MatP_C"/>
</dbReference>
<dbReference type="InterPro" id="IPR035087">
    <property type="entry name" value="MatP_N"/>
</dbReference>
<dbReference type="InterPro" id="IPR038339">
    <property type="entry name" value="MatP_N_sf"/>
</dbReference>
<dbReference type="NCBIfam" id="NF003471">
    <property type="entry name" value="PRK05097.1"/>
    <property type="match status" value="1"/>
</dbReference>
<dbReference type="Pfam" id="PF06303">
    <property type="entry name" value="MatP"/>
    <property type="match status" value="1"/>
</dbReference>
<dbReference type="Pfam" id="PF17414">
    <property type="entry name" value="MatP_C"/>
    <property type="match status" value="1"/>
</dbReference>
<comment type="function">
    <text evidence="1">Required for spatial organization of the terminus region of the chromosome (Ter macrodomain) during the cell cycle. Prevents early segregation of duplicated Ter macrodomains during cell division. Binds specifically to matS, which is a 13 bp signature motif repeated within the Ter macrodomain.</text>
</comment>
<comment type="subunit">
    <text evidence="1">Homodimer.</text>
</comment>
<comment type="subcellular location">
    <subcellularLocation>
        <location evidence="1">Cytoplasm</location>
    </subcellularLocation>
</comment>
<comment type="similarity">
    <text evidence="1">Belongs to the MatP family.</text>
</comment>
<accession>B2TTT9</accession>
<sequence>MKYQQLENLESGWKWKYLVKKHREGELITRYIEASAAQEAVDVLLSLENEPVLVNGWIDKHMNPELVNRMKQTIRARRKRHFNAEHQHTRKKSIDLEFIVWQRLAGLAQRRGKTLSETIVQLIEDAENKEKYANKMSSLKLDLQALLGKE</sequence>